<name>DNAJ_THEVO</name>
<accession>Q97BG9</accession>
<comment type="function">
    <text evidence="1">Participates actively in the response to hyperosmotic and heat shock by preventing the aggregation of stress-denatured proteins and by disaggregating proteins, also in an autonomous, DnaK-independent fashion. Unfolded proteins bind initially to DnaJ; upon interaction with the DnaJ-bound protein, DnaK hydrolyzes its bound ATP, resulting in the formation of a stable complex. GrpE releases ADP from DnaK; ATP binding to DnaK triggers the release of the substrate protein, thus completing the reaction cycle. Several rounds of ATP-dependent interactions between DnaJ, DnaK and GrpE are required for fully efficient folding. Also involved, together with DnaK and GrpE, in the DNA replication of plasmids through activation of initiation proteins.</text>
</comment>
<comment type="cofactor">
    <cofactor evidence="1">
        <name>Zn(2+)</name>
        <dbReference type="ChEBI" id="CHEBI:29105"/>
    </cofactor>
    <text evidence="1">Binds 2 Zn(2+) ions per monomer.</text>
</comment>
<comment type="subunit">
    <text evidence="1">Homodimer.</text>
</comment>
<comment type="subcellular location">
    <subcellularLocation>
        <location evidence="1">Cytoplasm</location>
    </subcellularLocation>
</comment>
<comment type="domain">
    <text evidence="1">The J domain is necessary and sufficient to stimulate DnaK ATPase activity. Zinc center 1 plays an important role in the autonomous, DnaK-independent chaperone activity of DnaJ. Zinc center 2 is essential for interaction with DnaK and for DnaJ activity.</text>
</comment>
<comment type="similarity">
    <text evidence="1">Belongs to the DnaJ family.</text>
</comment>
<dbReference type="EMBL" id="BA000011">
    <property type="protein sequence ID" value="BAB59628.1"/>
    <property type="molecule type" value="Genomic_DNA"/>
</dbReference>
<dbReference type="RefSeq" id="WP_010916745.1">
    <property type="nucleotide sequence ID" value="NC_002689.2"/>
</dbReference>
<dbReference type="SMR" id="Q97BG9"/>
<dbReference type="STRING" id="273116.gene:9381268"/>
<dbReference type="PaxDb" id="273116-14324701"/>
<dbReference type="GeneID" id="1441003"/>
<dbReference type="KEGG" id="tvo:TVG0470348"/>
<dbReference type="eggNOG" id="arCOG02846">
    <property type="taxonomic scope" value="Archaea"/>
</dbReference>
<dbReference type="HOGENOM" id="CLU_017633_0_7_2"/>
<dbReference type="OrthoDB" id="8967at2157"/>
<dbReference type="PhylomeDB" id="Q97BG9"/>
<dbReference type="Proteomes" id="UP000001017">
    <property type="component" value="Chromosome"/>
</dbReference>
<dbReference type="GO" id="GO:0005737">
    <property type="term" value="C:cytoplasm"/>
    <property type="evidence" value="ECO:0007669"/>
    <property type="project" value="UniProtKB-SubCell"/>
</dbReference>
<dbReference type="GO" id="GO:0005524">
    <property type="term" value="F:ATP binding"/>
    <property type="evidence" value="ECO:0007669"/>
    <property type="project" value="InterPro"/>
</dbReference>
<dbReference type="GO" id="GO:0031072">
    <property type="term" value="F:heat shock protein binding"/>
    <property type="evidence" value="ECO:0007669"/>
    <property type="project" value="InterPro"/>
</dbReference>
<dbReference type="GO" id="GO:0051082">
    <property type="term" value="F:unfolded protein binding"/>
    <property type="evidence" value="ECO:0007669"/>
    <property type="project" value="UniProtKB-UniRule"/>
</dbReference>
<dbReference type="GO" id="GO:0008270">
    <property type="term" value="F:zinc ion binding"/>
    <property type="evidence" value="ECO:0007669"/>
    <property type="project" value="UniProtKB-UniRule"/>
</dbReference>
<dbReference type="GO" id="GO:0051085">
    <property type="term" value="P:chaperone cofactor-dependent protein refolding"/>
    <property type="evidence" value="ECO:0007669"/>
    <property type="project" value="TreeGrafter"/>
</dbReference>
<dbReference type="GO" id="GO:0006260">
    <property type="term" value="P:DNA replication"/>
    <property type="evidence" value="ECO:0007669"/>
    <property type="project" value="UniProtKB-KW"/>
</dbReference>
<dbReference type="GO" id="GO:0042026">
    <property type="term" value="P:protein refolding"/>
    <property type="evidence" value="ECO:0007669"/>
    <property type="project" value="TreeGrafter"/>
</dbReference>
<dbReference type="GO" id="GO:0009408">
    <property type="term" value="P:response to heat"/>
    <property type="evidence" value="ECO:0007669"/>
    <property type="project" value="InterPro"/>
</dbReference>
<dbReference type="CDD" id="cd06257">
    <property type="entry name" value="DnaJ"/>
    <property type="match status" value="1"/>
</dbReference>
<dbReference type="CDD" id="cd10747">
    <property type="entry name" value="DnaJ_C"/>
    <property type="match status" value="1"/>
</dbReference>
<dbReference type="CDD" id="cd10719">
    <property type="entry name" value="DnaJ_zf"/>
    <property type="match status" value="1"/>
</dbReference>
<dbReference type="FunFam" id="1.10.287.110:FF:000034">
    <property type="entry name" value="Chaperone protein DnaJ"/>
    <property type="match status" value="1"/>
</dbReference>
<dbReference type="FunFam" id="2.60.260.20:FF:000005">
    <property type="entry name" value="Chaperone protein dnaJ 1, mitochondrial"/>
    <property type="match status" value="1"/>
</dbReference>
<dbReference type="FunFam" id="2.10.230.10:FF:000001">
    <property type="entry name" value="DnaJ subfamily A member 2"/>
    <property type="match status" value="1"/>
</dbReference>
<dbReference type="Gene3D" id="1.10.287.110">
    <property type="entry name" value="DnaJ domain"/>
    <property type="match status" value="1"/>
</dbReference>
<dbReference type="Gene3D" id="2.10.230.10">
    <property type="entry name" value="Heat shock protein DnaJ, cysteine-rich domain"/>
    <property type="match status" value="1"/>
</dbReference>
<dbReference type="Gene3D" id="2.60.260.20">
    <property type="entry name" value="Urease metallochaperone UreE, N-terminal domain"/>
    <property type="match status" value="2"/>
</dbReference>
<dbReference type="HAMAP" id="MF_01152">
    <property type="entry name" value="DnaJ"/>
    <property type="match status" value="1"/>
</dbReference>
<dbReference type="InterPro" id="IPR012724">
    <property type="entry name" value="DnaJ"/>
</dbReference>
<dbReference type="InterPro" id="IPR002939">
    <property type="entry name" value="DnaJ_C"/>
</dbReference>
<dbReference type="InterPro" id="IPR001623">
    <property type="entry name" value="DnaJ_domain"/>
</dbReference>
<dbReference type="InterPro" id="IPR018253">
    <property type="entry name" value="DnaJ_domain_CS"/>
</dbReference>
<dbReference type="InterPro" id="IPR008971">
    <property type="entry name" value="HSP40/DnaJ_pept-bd"/>
</dbReference>
<dbReference type="InterPro" id="IPR001305">
    <property type="entry name" value="HSP_DnaJ_Cys-rich_dom"/>
</dbReference>
<dbReference type="InterPro" id="IPR036410">
    <property type="entry name" value="HSP_DnaJ_Cys-rich_dom_sf"/>
</dbReference>
<dbReference type="InterPro" id="IPR036869">
    <property type="entry name" value="J_dom_sf"/>
</dbReference>
<dbReference type="NCBIfam" id="TIGR02349">
    <property type="entry name" value="DnaJ_bact"/>
    <property type="match status" value="1"/>
</dbReference>
<dbReference type="NCBIfam" id="NF008035">
    <property type="entry name" value="PRK10767.1"/>
    <property type="match status" value="1"/>
</dbReference>
<dbReference type="NCBIfam" id="NF010883">
    <property type="entry name" value="PRK14290.1"/>
    <property type="match status" value="1"/>
</dbReference>
<dbReference type="PANTHER" id="PTHR43096:SF48">
    <property type="entry name" value="CHAPERONE PROTEIN DNAJ"/>
    <property type="match status" value="1"/>
</dbReference>
<dbReference type="PANTHER" id="PTHR43096">
    <property type="entry name" value="DNAJ HOMOLOG 1, MITOCHONDRIAL-RELATED"/>
    <property type="match status" value="1"/>
</dbReference>
<dbReference type="Pfam" id="PF00226">
    <property type="entry name" value="DnaJ"/>
    <property type="match status" value="1"/>
</dbReference>
<dbReference type="Pfam" id="PF01556">
    <property type="entry name" value="DnaJ_C"/>
    <property type="match status" value="1"/>
</dbReference>
<dbReference type="Pfam" id="PF00684">
    <property type="entry name" value="DnaJ_CXXCXGXG"/>
    <property type="match status" value="1"/>
</dbReference>
<dbReference type="PRINTS" id="PR00625">
    <property type="entry name" value="JDOMAIN"/>
</dbReference>
<dbReference type="SMART" id="SM00271">
    <property type="entry name" value="DnaJ"/>
    <property type="match status" value="1"/>
</dbReference>
<dbReference type="SUPFAM" id="SSF46565">
    <property type="entry name" value="Chaperone J-domain"/>
    <property type="match status" value="1"/>
</dbReference>
<dbReference type="SUPFAM" id="SSF57938">
    <property type="entry name" value="DnaJ/Hsp40 cysteine-rich domain"/>
    <property type="match status" value="1"/>
</dbReference>
<dbReference type="SUPFAM" id="SSF49493">
    <property type="entry name" value="HSP40/DnaJ peptide-binding domain"/>
    <property type="match status" value="2"/>
</dbReference>
<dbReference type="PROSITE" id="PS00636">
    <property type="entry name" value="DNAJ_1"/>
    <property type="match status" value="1"/>
</dbReference>
<dbReference type="PROSITE" id="PS50076">
    <property type="entry name" value="DNAJ_2"/>
    <property type="match status" value="1"/>
</dbReference>
<dbReference type="PROSITE" id="PS51188">
    <property type="entry name" value="ZF_CR"/>
    <property type="match status" value="1"/>
</dbReference>
<keyword id="KW-0143">Chaperone</keyword>
<keyword id="KW-0963">Cytoplasm</keyword>
<keyword id="KW-0235">DNA replication</keyword>
<keyword id="KW-0479">Metal-binding</keyword>
<keyword id="KW-0677">Repeat</keyword>
<keyword id="KW-0346">Stress response</keyword>
<keyword id="KW-0862">Zinc</keyword>
<keyword id="KW-0863">Zinc-finger</keyword>
<proteinExistence type="inferred from homology"/>
<protein>
    <recommendedName>
        <fullName evidence="1">Chaperone protein DnaJ</fullName>
    </recommendedName>
</protein>
<evidence type="ECO:0000255" key="1">
    <source>
        <dbReference type="HAMAP-Rule" id="MF_01152"/>
    </source>
</evidence>
<reference key="1">
    <citation type="journal article" date="2000" name="Proc. Natl. Acad. Sci. U.S.A.">
        <title>Archaeal adaptation to higher temperatures revealed by genomic sequence of Thermoplasma volcanium.</title>
        <authorList>
            <person name="Kawashima T."/>
            <person name="Amano N."/>
            <person name="Koike H."/>
            <person name="Makino S."/>
            <person name="Higuchi S."/>
            <person name="Kawashima-Ohya Y."/>
            <person name="Watanabe K."/>
            <person name="Yamazaki M."/>
            <person name="Kanehori K."/>
            <person name="Kawamoto T."/>
            <person name="Nunoshiba T."/>
            <person name="Yamamoto Y."/>
            <person name="Aramaki H."/>
            <person name="Makino K."/>
            <person name="Suzuki M."/>
        </authorList>
    </citation>
    <scope>NUCLEOTIDE SEQUENCE [LARGE SCALE GENOMIC DNA]</scope>
    <source>
        <strain>ATCC 51530 / DSM 4299 / JCM 9571 / NBRC 15438 / GSS1</strain>
    </source>
</reference>
<sequence length="365" mass="41149">MAKDYYKILGVDRNASEEDIKKAFRELAKKWHPDLHPDNKAEAEEKFKEISEAYEVLSDPEKRRIYDQTGSVDFGGGGSNFNWDNFTHFSDINDIFNEIFGGNFGSDFFSGFGNRQSTRNIDLDMYTNLDISLEEAYYGTEKRIKFRRNAICPDCKGTGAKNGKLITCPTCHGTGQQRVVRGQGFFRMVTVTTCNTCGGKGRIPEEKCPRCNGTGTIVVDEDITVKIPRGATDNLRLRVSGKGQSYDGRTGDLYVILRIKQDKNLQRINDDLLLDQKINFGQAALGADIPIQIFNEKYNLKIPEGTQPGDVIKIKGAGMPHLNGHGSGDLLVRINVEVPKRLTAKQRELIRELFDIKENHKSWFH</sequence>
<feature type="chain" id="PRO_0000070954" description="Chaperone protein DnaJ">
    <location>
        <begin position="1"/>
        <end position="365"/>
    </location>
</feature>
<feature type="domain" description="J" evidence="1">
    <location>
        <begin position="4"/>
        <end position="70"/>
    </location>
</feature>
<feature type="repeat" description="CXXCXGXG motif">
    <location>
        <begin position="152"/>
        <end position="159"/>
    </location>
</feature>
<feature type="repeat" description="CXXCXGXG motif">
    <location>
        <begin position="168"/>
        <end position="175"/>
    </location>
</feature>
<feature type="repeat" description="CXXCXGXG motif">
    <location>
        <begin position="194"/>
        <end position="201"/>
    </location>
</feature>
<feature type="repeat" description="CXXCXGXG motif">
    <location>
        <begin position="208"/>
        <end position="215"/>
    </location>
</feature>
<feature type="zinc finger region" description="CR-type" evidence="1">
    <location>
        <begin position="139"/>
        <end position="220"/>
    </location>
</feature>
<feature type="binding site" evidence="1">
    <location>
        <position position="152"/>
    </location>
    <ligand>
        <name>Zn(2+)</name>
        <dbReference type="ChEBI" id="CHEBI:29105"/>
        <label>1</label>
    </ligand>
</feature>
<feature type="binding site" evidence="1">
    <location>
        <position position="155"/>
    </location>
    <ligand>
        <name>Zn(2+)</name>
        <dbReference type="ChEBI" id="CHEBI:29105"/>
        <label>1</label>
    </ligand>
</feature>
<feature type="binding site" evidence="1">
    <location>
        <position position="168"/>
    </location>
    <ligand>
        <name>Zn(2+)</name>
        <dbReference type="ChEBI" id="CHEBI:29105"/>
        <label>2</label>
    </ligand>
</feature>
<feature type="binding site" evidence="1">
    <location>
        <position position="171"/>
    </location>
    <ligand>
        <name>Zn(2+)</name>
        <dbReference type="ChEBI" id="CHEBI:29105"/>
        <label>2</label>
    </ligand>
</feature>
<feature type="binding site" evidence="1">
    <location>
        <position position="194"/>
    </location>
    <ligand>
        <name>Zn(2+)</name>
        <dbReference type="ChEBI" id="CHEBI:29105"/>
        <label>2</label>
    </ligand>
</feature>
<feature type="binding site" evidence="1">
    <location>
        <position position="197"/>
    </location>
    <ligand>
        <name>Zn(2+)</name>
        <dbReference type="ChEBI" id="CHEBI:29105"/>
        <label>2</label>
    </ligand>
</feature>
<feature type="binding site" evidence="1">
    <location>
        <position position="208"/>
    </location>
    <ligand>
        <name>Zn(2+)</name>
        <dbReference type="ChEBI" id="CHEBI:29105"/>
        <label>1</label>
    </ligand>
</feature>
<feature type="binding site" evidence="1">
    <location>
        <position position="211"/>
    </location>
    <ligand>
        <name>Zn(2+)</name>
        <dbReference type="ChEBI" id="CHEBI:29105"/>
        <label>1</label>
    </ligand>
</feature>
<organism>
    <name type="scientific">Thermoplasma volcanium (strain ATCC 51530 / DSM 4299 / JCM 9571 / NBRC 15438 / GSS1)</name>
    <dbReference type="NCBI Taxonomy" id="273116"/>
    <lineage>
        <taxon>Archaea</taxon>
        <taxon>Methanobacteriati</taxon>
        <taxon>Thermoplasmatota</taxon>
        <taxon>Thermoplasmata</taxon>
        <taxon>Thermoplasmatales</taxon>
        <taxon>Thermoplasmataceae</taxon>
        <taxon>Thermoplasma</taxon>
    </lineage>
</organism>
<gene>
    <name evidence="1" type="primary">dnaJ</name>
    <name type="ordered locus">TV0486</name>
    <name type="ORF">TVG0470348</name>
</gene>